<feature type="chain" id="PRO_1000068804" description="p-hydroxybenzoic acid efflux pump subunit AaeA">
    <location>
        <begin position="1"/>
        <end position="310"/>
    </location>
</feature>
<feature type="transmembrane region" description="Helical" evidence="1">
    <location>
        <begin position="12"/>
        <end position="32"/>
    </location>
</feature>
<accession>A4WF55</accession>
<keyword id="KW-0997">Cell inner membrane</keyword>
<keyword id="KW-1003">Cell membrane</keyword>
<keyword id="KW-0472">Membrane</keyword>
<keyword id="KW-0812">Transmembrane</keyword>
<keyword id="KW-1133">Transmembrane helix</keyword>
<keyword id="KW-0813">Transport</keyword>
<evidence type="ECO:0000255" key="1">
    <source>
        <dbReference type="HAMAP-Rule" id="MF_01544"/>
    </source>
</evidence>
<organism>
    <name type="scientific">Enterobacter sp. (strain 638)</name>
    <dbReference type="NCBI Taxonomy" id="399742"/>
    <lineage>
        <taxon>Bacteria</taxon>
        <taxon>Pseudomonadati</taxon>
        <taxon>Pseudomonadota</taxon>
        <taxon>Gammaproteobacteria</taxon>
        <taxon>Enterobacterales</taxon>
        <taxon>Enterobacteriaceae</taxon>
        <taxon>Enterobacter</taxon>
    </lineage>
</organism>
<dbReference type="EMBL" id="CP000653">
    <property type="protein sequence ID" value="ABP62335.1"/>
    <property type="molecule type" value="Genomic_DNA"/>
</dbReference>
<dbReference type="RefSeq" id="WP_015960658.1">
    <property type="nucleotide sequence ID" value="NC_009436.1"/>
</dbReference>
<dbReference type="SMR" id="A4WF55"/>
<dbReference type="STRING" id="399742.Ent638_3678"/>
<dbReference type="KEGG" id="ent:Ent638_3678"/>
<dbReference type="eggNOG" id="COG1566">
    <property type="taxonomic scope" value="Bacteria"/>
</dbReference>
<dbReference type="HOGENOM" id="CLU_018816_15_2_6"/>
<dbReference type="OrthoDB" id="9811754at2"/>
<dbReference type="Proteomes" id="UP000000230">
    <property type="component" value="Chromosome"/>
</dbReference>
<dbReference type="GO" id="GO:0005886">
    <property type="term" value="C:plasma membrane"/>
    <property type="evidence" value="ECO:0007669"/>
    <property type="project" value="UniProtKB-SubCell"/>
</dbReference>
<dbReference type="GO" id="GO:0022857">
    <property type="term" value="F:transmembrane transporter activity"/>
    <property type="evidence" value="ECO:0007669"/>
    <property type="project" value="UniProtKB-UniRule"/>
</dbReference>
<dbReference type="Gene3D" id="2.40.30.170">
    <property type="match status" value="1"/>
</dbReference>
<dbReference type="Gene3D" id="2.40.50.100">
    <property type="match status" value="1"/>
</dbReference>
<dbReference type="HAMAP" id="MF_01544">
    <property type="entry name" value="AaeA"/>
    <property type="match status" value="1"/>
</dbReference>
<dbReference type="InterPro" id="IPR043602">
    <property type="entry name" value="CusB-like_dom_1"/>
</dbReference>
<dbReference type="InterPro" id="IPR032317">
    <property type="entry name" value="CusB_D23"/>
</dbReference>
<dbReference type="InterPro" id="IPR050393">
    <property type="entry name" value="MFP_Efflux_Pump"/>
</dbReference>
<dbReference type="InterPro" id="IPR022871">
    <property type="entry name" value="PHBA_efflux_pump_AaeA"/>
</dbReference>
<dbReference type="InterPro" id="IPR006143">
    <property type="entry name" value="RND_pump_MFP"/>
</dbReference>
<dbReference type="NCBIfam" id="NF007850">
    <property type="entry name" value="PRK10559.1"/>
    <property type="match status" value="1"/>
</dbReference>
<dbReference type="NCBIfam" id="TIGR01730">
    <property type="entry name" value="RND_mfp"/>
    <property type="match status" value="1"/>
</dbReference>
<dbReference type="PANTHER" id="PTHR30367:SF12">
    <property type="entry name" value="P-HYDROXYBENZOIC ACID EFFLUX PUMP SUBUNIT AAEA"/>
    <property type="match status" value="1"/>
</dbReference>
<dbReference type="PANTHER" id="PTHR30367">
    <property type="entry name" value="P-HYDROXYBENZOIC ACID EFFLUX PUMP SUBUNIT AAEA-RELATED"/>
    <property type="match status" value="1"/>
</dbReference>
<dbReference type="Pfam" id="PF00529">
    <property type="entry name" value="CusB_dom_1"/>
    <property type="match status" value="1"/>
</dbReference>
<dbReference type="Pfam" id="PF16576">
    <property type="entry name" value="HlyD_D23"/>
    <property type="match status" value="1"/>
</dbReference>
<dbReference type="SUPFAM" id="SSF111369">
    <property type="entry name" value="HlyD-like secretion proteins"/>
    <property type="match status" value="1"/>
</dbReference>
<proteinExistence type="inferred from homology"/>
<comment type="function">
    <text evidence="1">Forms an efflux pump with AaeB.</text>
</comment>
<comment type="subcellular location">
    <subcellularLocation>
        <location evidence="1">Cell inner membrane</location>
        <topology evidence="1">Single-pass membrane protein</topology>
    </subcellularLocation>
</comment>
<comment type="similarity">
    <text evidence="1">Belongs to the membrane fusion protein (MFP) (TC 8.A.1) family.</text>
</comment>
<gene>
    <name evidence="1" type="primary">aaeA</name>
    <name type="ordered locus">Ent638_3678</name>
</gene>
<protein>
    <recommendedName>
        <fullName evidence="1">p-hydroxybenzoic acid efflux pump subunit AaeA</fullName>
        <shortName evidence="1">pHBA efflux pump protein A</shortName>
    </recommendedName>
</protein>
<name>AAEA_ENT38</name>
<reference key="1">
    <citation type="journal article" date="2010" name="PLoS Genet.">
        <title>Genome sequence of the plant growth promoting endophytic bacterium Enterobacter sp. 638.</title>
        <authorList>
            <person name="Taghavi S."/>
            <person name="van der Lelie D."/>
            <person name="Hoffman A."/>
            <person name="Zhang Y.B."/>
            <person name="Walla M.D."/>
            <person name="Vangronsveld J."/>
            <person name="Newman L."/>
            <person name="Monchy S."/>
        </authorList>
    </citation>
    <scope>NUCLEOTIDE SEQUENCE [LARGE SCALE GENOMIC DNA]</scope>
    <source>
        <strain>638</strain>
    </source>
</reference>
<sequence>MKTLTRNISRTAITVALVILAFIAISRAWVFYTESPWTRDARFSADIVAIAPDVAGLITAVNVRDNQLVKKDQVLFTIDQPRYQKALEESEADVAYYQALTTEKRREAGRRNKLGIQAMSREEIDQSNNLLQTVLHQLAKAEATRDLAKLDLERTVIRAPSDGWVTNLNVYTGEFITRGSTAVALVKQHSFYVLAYMEETKLEGVRPGYRAEITPLGSNRVLKGTVDSIAAGVTNSSATRDSKGMATVDSNLEWVRLAQRVPVRIRLDDEQGNLWPAGTTATVVITGEKDRNASNDSLFRKIAHRLREFG</sequence>